<name>SYP_HALLT</name>
<dbReference type="EC" id="6.1.1.15" evidence="1"/>
<dbReference type="EMBL" id="CP001365">
    <property type="protein sequence ID" value="ACM56377.1"/>
    <property type="molecule type" value="Genomic_DNA"/>
</dbReference>
<dbReference type="RefSeq" id="WP_012660007.1">
    <property type="nucleotide sequence ID" value="NC_012029.1"/>
</dbReference>
<dbReference type="SMR" id="B9LUM0"/>
<dbReference type="GeneID" id="7400252"/>
<dbReference type="KEGG" id="hla:Hlac_0777"/>
<dbReference type="eggNOG" id="arCOG00402">
    <property type="taxonomic scope" value="Archaea"/>
</dbReference>
<dbReference type="HOGENOM" id="CLU_001882_4_2_2"/>
<dbReference type="Proteomes" id="UP000000740">
    <property type="component" value="Chromosome 1"/>
</dbReference>
<dbReference type="GO" id="GO:0017101">
    <property type="term" value="C:aminoacyl-tRNA synthetase multienzyme complex"/>
    <property type="evidence" value="ECO:0007669"/>
    <property type="project" value="TreeGrafter"/>
</dbReference>
<dbReference type="GO" id="GO:0005737">
    <property type="term" value="C:cytoplasm"/>
    <property type="evidence" value="ECO:0007669"/>
    <property type="project" value="UniProtKB-SubCell"/>
</dbReference>
<dbReference type="GO" id="GO:0005524">
    <property type="term" value="F:ATP binding"/>
    <property type="evidence" value="ECO:0007669"/>
    <property type="project" value="UniProtKB-UniRule"/>
</dbReference>
<dbReference type="GO" id="GO:0004827">
    <property type="term" value="F:proline-tRNA ligase activity"/>
    <property type="evidence" value="ECO:0007669"/>
    <property type="project" value="UniProtKB-UniRule"/>
</dbReference>
<dbReference type="GO" id="GO:0006433">
    <property type="term" value="P:prolyl-tRNA aminoacylation"/>
    <property type="evidence" value="ECO:0007669"/>
    <property type="project" value="UniProtKB-UniRule"/>
</dbReference>
<dbReference type="CDD" id="cd00862">
    <property type="entry name" value="ProRS_anticodon_zinc"/>
    <property type="match status" value="1"/>
</dbReference>
<dbReference type="CDD" id="cd00778">
    <property type="entry name" value="ProRS_core_arch_euk"/>
    <property type="match status" value="1"/>
</dbReference>
<dbReference type="FunFam" id="3.30.930.10:FF:000037">
    <property type="entry name" value="Proline--tRNA ligase"/>
    <property type="match status" value="1"/>
</dbReference>
<dbReference type="Gene3D" id="3.40.50.800">
    <property type="entry name" value="Anticodon-binding domain"/>
    <property type="match status" value="1"/>
</dbReference>
<dbReference type="Gene3D" id="3.30.930.10">
    <property type="entry name" value="Bira Bifunctional Protein, Domain 2"/>
    <property type="match status" value="1"/>
</dbReference>
<dbReference type="Gene3D" id="3.30.110.30">
    <property type="entry name" value="C-terminal domain of ProRS"/>
    <property type="match status" value="1"/>
</dbReference>
<dbReference type="HAMAP" id="MF_01571">
    <property type="entry name" value="Pro_tRNA_synth_type3"/>
    <property type="match status" value="1"/>
</dbReference>
<dbReference type="InterPro" id="IPR002314">
    <property type="entry name" value="aa-tRNA-synt_IIb"/>
</dbReference>
<dbReference type="InterPro" id="IPR006195">
    <property type="entry name" value="aa-tRNA-synth_II"/>
</dbReference>
<dbReference type="InterPro" id="IPR045864">
    <property type="entry name" value="aa-tRNA-synth_II/BPL/LPL"/>
</dbReference>
<dbReference type="InterPro" id="IPR004154">
    <property type="entry name" value="Anticodon-bd"/>
</dbReference>
<dbReference type="InterPro" id="IPR036621">
    <property type="entry name" value="Anticodon-bd_dom_sf"/>
</dbReference>
<dbReference type="InterPro" id="IPR002316">
    <property type="entry name" value="Pro-tRNA-ligase_IIa"/>
</dbReference>
<dbReference type="InterPro" id="IPR004499">
    <property type="entry name" value="Pro-tRNA-ligase_IIa_arc-type"/>
</dbReference>
<dbReference type="InterPro" id="IPR016061">
    <property type="entry name" value="Pro-tRNA_ligase_II_C"/>
</dbReference>
<dbReference type="InterPro" id="IPR017449">
    <property type="entry name" value="Pro-tRNA_synth_II"/>
</dbReference>
<dbReference type="InterPro" id="IPR033721">
    <property type="entry name" value="ProRS_core_arch_euk"/>
</dbReference>
<dbReference type="NCBIfam" id="TIGR00408">
    <property type="entry name" value="proS_fam_I"/>
    <property type="match status" value="1"/>
</dbReference>
<dbReference type="PANTHER" id="PTHR43382:SF2">
    <property type="entry name" value="BIFUNCTIONAL GLUTAMATE_PROLINE--TRNA LIGASE"/>
    <property type="match status" value="1"/>
</dbReference>
<dbReference type="PANTHER" id="PTHR43382">
    <property type="entry name" value="PROLYL-TRNA SYNTHETASE"/>
    <property type="match status" value="1"/>
</dbReference>
<dbReference type="Pfam" id="PF03129">
    <property type="entry name" value="HGTP_anticodon"/>
    <property type="match status" value="1"/>
</dbReference>
<dbReference type="Pfam" id="PF09180">
    <property type="entry name" value="ProRS-C_1"/>
    <property type="match status" value="1"/>
</dbReference>
<dbReference type="Pfam" id="PF00587">
    <property type="entry name" value="tRNA-synt_2b"/>
    <property type="match status" value="1"/>
</dbReference>
<dbReference type="PRINTS" id="PR01046">
    <property type="entry name" value="TRNASYNTHPRO"/>
</dbReference>
<dbReference type="SMART" id="SM00946">
    <property type="entry name" value="ProRS-C_1"/>
    <property type="match status" value="1"/>
</dbReference>
<dbReference type="SUPFAM" id="SSF64586">
    <property type="entry name" value="C-terminal domain of ProRS"/>
    <property type="match status" value="1"/>
</dbReference>
<dbReference type="SUPFAM" id="SSF52954">
    <property type="entry name" value="Class II aaRS ABD-related"/>
    <property type="match status" value="1"/>
</dbReference>
<dbReference type="SUPFAM" id="SSF55681">
    <property type="entry name" value="Class II aaRS and biotin synthetases"/>
    <property type="match status" value="1"/>
</dbReference>
<dbReference type="PROSITE" id="PS50862">
    <property type="entry name" value="AA_TRNA_LIGASE_II"/>
    <property type="match status" value="1"/>
</dbReference>
<evidence type="ECO:0000255" key="1">
    <source>
        <dbReference type="HAMAP-Rule" id="MF_01571"/>
    </source>
</evidence>
<sequence length="491" mass="54939">MSDDDQELGITESKSHNTGEWYAEVVQKAGLADYGPEGMSGFIVTRPRAYAVWERLQGFLDAKFKDTGVQNAYFPLFIPESYLEREKDIVEGFDPEVAWVTEAGNKELEERLAVRPTSESIITPYISQWVRSHRDLPLRVNQWCSVVRWEATETKPFFRTKEFLWQEGHTAHATHEGAWEETMTRLDQYASVYEDLLAMPVLKGQKPDHDKFPGAETTTTVEALMPDGKSVQAGTSHHLGQSFAEAFDITFSDEDEEERIAHTTSWGLSWRALGALIMTHSDEQGLVLPPGVAPEQVVVVPIWQEDTKDEVLEYAEGVADDLDDAGIRVELDDRDGRNPGFKFNEHELNGVPLRIEIGPHEVEDGELTLVHRPDGESVVEDREGVVATVQDHFDEVYAKLYATAEETLDGAVREADDRADILGTLGQHGGYVTAPWCGDEACEEPIKEPMAAEIVMVPFEDDDPLAEADHGETCAICDDDAERTAYFAKSY</sequence>
<accession>B9LUM0</accession>
<protein>
    <recommendedName>
        <fullName evidence="1">Proline--tRNA ligase</fullName>
        <ecNumber evidence="1">6.1.1.15</ecNumber>
    </recommendedName>
    <alternativeName>
        <fullName evidence="1">Prolyl-tRNA synthetase</fullName>
        <shortName evidence="1">ProRS</shortName>
    </alternativeName>
</protein>
<feature type="chain" id="PRO_1000215564" description="Proline--tRNA ligase">
    <location>
        <begin position="1"/>
        <end position="491"/>
    </location>
</feature>
<comment type="function">
    <text evidence="1">Catalyzes the attachment of proline to tRNA(Pro) in a two-step reaction: proline is first activated by ATP to form Pro-AMP and then transferred to the acceptor end of tRNA(Pro).</text>
</comment>
<comment type="catalytic activity">
    <reaction evidence="1">
        <text>tRNA(Pro) + L-proline + ATP = L-prolyl-tRNA(Pro) + AMP + diphosphate</text>
        <dbReference type="Rhea" id="RHEA:14305"/>
        <dbReference type="Rhea" id="RHEA-COMP:9700"/>
        <dbReference type="Rhea" id="RHEA-COMP:9702"/>
        <dbReference type="ChEBI" id="CHEBI:30616"/>
        <dbReference type="ChEBI" id="CHEBI:33019"/>
        <dbReference type="ChEBI" id="CHEBI:60039"/>
        <dbReference type="ChEBI" id="CHEBI:78442"/>
        <dbReference type="ChEBI" id="CHEBI:78532"/>
        <dbReference type="ChEBI" id="CHEBI:456215"/>
        <dbReference type="EC" id="6.1.1.15"/>
    </reaction>
</comment>
<comment type="subunit">
    <text evidence="1">Homodimer.</text>
</comment>
<comment type="subcellular location">
    <subcellularLocation>
        <location evidence="1">Cytoplasm</location>
    </subcellularLocation>
</comment>
<comment type="domain">
    <text evidence="1">Consists of three domains: the N-terminal catalytic domain, the anticodon-binding domain and the C-terminal extension.</text>
</comment>
<comment type="similarity">
    <text evidence="1">Belongs to the class-II aminoacyl-tRNA synthetase family. ProS type 3 subfamily.</text>
</comment>
<organism>
    <name type="scientific">Halorubrum lacusprofundi (strain ATCC 49239 / DSM 5036 / JCM 8891 / ACAM 34)</name>
    <dbReference type="NCBI Taxonomy" id="416348"/>
    <lineage>
        <taxon>Archaea</taxon>
        <taxon>Methanobacteriati</taxon>
        <taxon>Methanobacteriota</taxon>
        <taxon>Stenosarchaea group</taxon>
        <taxon>Halobacteria</taxon>
        <taxon>Halobacteriales</taxon>
        <taxon>Haloferacaceae</taxon>
        <taxon>Halorubrum</taxon>
    </lineage>
</organism>
<gene>
    <name evidence="1" type="primary">proS</name>
    <name type="ordered locus">Hlac_0777</name>
</gene>
<reference key="1">
    <citation type="journal article" date="2016" name="Stand. Genomic Sci.">
        <title>Complete genome sequence of the Antarctic Halorubrum lacusprofundi type strain ACAM 34.</title>
        <authorList>
            <person name="Anderson I.J."/>
            <person name="DasSarma P."/>
            <person name="Lucas S."/>
            <person name="Copeland A."/>
            <person name="Lapidus A."/>
            <person name="Del Rio T.G."/>
            <person name="Tice H."/>
            <person name="Dalin E."/>
            <person name="Bruce D.C."/>
            <person name="Goodwin L."/>
            <person name="Pitluck S."/>
            <person name="Sims D."/>
            <person name="Brettin T.S."/>
            <person name="Detter J.C."/>
            <person name="Han C.S."/>
            <person name="Larimer F."/>
            <person name="Hauser L."/>
            <person name="Land M."/>
            <person name="Ivanova N."/>
            <person name="Richardson P."/>
            <person name="Cavicchioli R."/>
            <person name="DasSarma S."/>
            <person name="Woese C.R."/>
            <person name="Kyrpides N.C."/>
        </authorList>
    </citation>
    <scope>NUCLEOTIDE SEQUENCE [LARGE SCALE GENOMIC DNA]</scope>
    <source>
        <strain>ATCC 49239 / DSM 5036 / JCM 8891 / ACAM 34</strain>
    </source>
</reference>
<proteinExistence type="inferred from homology"/>
<keyword id="KW-0030">Aminoacyl-tRNA synthetase</keyword>
<keyword id="KW-0067">ATP-binding</keyword>
<keyword id="KW-0963">Cytoplasm</keyword>
<keyword id="KW-0436">Ligase</keyword>
<keyword id="KW-0547">Nucleotide-binding</keyword>
<keyword id="KW-0648">Protein biosynthesis</keyword>
<keyword id="KW-1185">Reference proteome</keyword>